<keyword id="KW-0997">Cell inner membrane</keyword>
<keyword id="KW-1003">Cell membrane</keyword>
<keyword id="KW-0186">Copper</keyword>
<keyword id="KW-0472">Membrane</keyword>
<keyword id="KW-1185">Reference proteome</keyword>
<keyword id="KW-0735">Signal-anchor</keyword>
<keyword id="KW-0812">Transmembrane</keyword>
<keyword id="KW-1133">Transmembrane helix</keyword>
<comment type="function">
    <text evidence="1">Exerts its effect at some terminal stage of cytochrome c oxidase synthesis, probably by being involved in the insertion of the copper B into subunit I.</text>
</comment>
<comment type="subcellular location">
    <subcellularLocation>
        <location evidence="1">Cell inner membrane</location>
        <topology evidence="1">Single-pass type II membrane protein</topology>
        <orientation evidence="1">Periplasmic side</orientation>
    </subcellularLocation>
</comment>
<comment type="similarity">
    <text evidence="1">Belongs to the COX11/CtaG family.</text>
</comment>
<accession>Q2KBM0</accession>
<name>COXZ_RHIEC</name>
<sequence>MSDKAAAPRKQGRNNGAVVMMCLSFVFGMGAMSYAAVPLYRIFCQVTGYNGTTQRVEQMSSVVLDRKMRVTFDANVAPGLQWNFKPVEREVNPKIGETIQVNFVAENKSNETQRGQAVFNVTPGEAGAYFNKVQCFCFTETDLKPGEKLEMPVVFYIDPEIVKAVESKDIHTVTLSYTFYPKEGPKPVASNEGGTVKIEKKL</sequence>
<protein>
    <recommendedName>
        <fullName evidence="1">Cytochrome c oxidase assembly protein CtaG</fullName>
    </recommendedName>
</protein>
<dbReference type="EMBL" id="CP000133">
    <property type="protein sequence ID" value="ABC89766.1"/>
    <property type="molecule type" value="Genomic_DNA"/>
</dbReference>
<dbReference type="RefSeq" id="WP_011424302.1">
    <property type="nucleotide sequence ID" value="NC_007761.1"/>
</dbReference>
<dbReference type="SMR" id="Q2KBM0"/>
<dbReference type="KEGG" id="ret:RHE_CH00955"/>
<dbReference type="eggNOG" id="COG3175">
    <property type="taxonomic scope" value="Bacteria"/>
</dbReference>
<dbReference type="HOGENOM" id="CLU_045000_5_0_5"/>
<dbReference type="OrthoDB" id="9804841at2"/>
<dbReference type="Proteomes" id="UP000001936">
    <property type="component" value="Chromosome"/>
</dbReference>
<dbReference type="GO" id="GO:0005886">
    <property type="term" value="C:plasma membrane"/>
    <property type="evidence" value="ECO:0007669"/>
    <property type="project" value="UniProtKB-SubCell"/>
</dbReference>
<dbReference type="GO" id="GO:0005507">
    <property type="term" value="F:copper ion binding"/>
    <property type="evidence" value="ECO:0007669"/>
    <property type="project" value="InterPro"/>
</dbReference>
<dbReference type="GO" id="GO:0008535">
    <property type="term" value="P:respiratory chain complex IV assembly"/>
    <property type="evidence" value="ECO:0007669"/>
    <property type="project" value="UniProtKB-UniRule"/>
</dbReference>
<dbReference type="FunFam" id="2.60.370.10:FF:000001">
    <property type="entry name" value="COX11 cytochrome c oxidase assembly homolog"/>
    <property type="match status" value="1"/>
</dbReference>
<dbReference type="Gene3D" id="2.60.370.10">
    <property type="entry name" value="Ctag/Cox11"/>
    <property type="match status" value="1"/>
</dbReference>
<dbReference type="HAMAP" id="MF_00155">
    <property type="entry name" value="CtaG"/>
    <property type="match status" value="1"/>
</dbReference>
<dbReference type="InterPro" id="IPR023471">
    <property type="entry name" value="CtaG/Cox11_dom_sf"/>
</dbReference>
<dbReference type="InterPro" id="IPR007533">
    <property type="entry name" value="Cyt_c_oxidase_assmbl_CtaG"/>
</dbReference>
<dbReference type="NCBIfam" id="NF003465">
    <property type="entry name" value="PRK05089.1"/>
    <property type="match status" value="1"/>
</dbReference>
<dbReference type="PANTHER" id="PTHR21320:SF3">
    <property type="entry name" value="CYTOCHROME C OXIDASE ASSEMBLY PROTEIN COX11, MITOCHONDRIAL-RELATED"/>
    <property type="match status" value="1"/>
</dbReference>
<dbReference type="PANTHER" id="PTHR21320">
    <property type="entry name" value="CYTOCHROME C OXIDASE ASSEMBLY PROTEIN COX11-RELATED"/>
    <property type="match status" value="1"/>
</dbReference>
<dbReference type="Pfam" id="PF04442">
    <property type="entry name" value="CtaG_Cox11"/>
    <property type="match status" value="1"/>
</dbReference>
<dbReference type="PIRSF" id="PIRSF005413">
    <property type="entry name" value="COX11"/>
    <property type="match status" value="1"/>
</dbReference>
<dbReference type="SUPFAM" id="SSF110111">
    <property type="entry name" value="Ctag/Cox11"/>
    <property type="match status" value="1"/>
</dbReference>
<organism>
    <name type="scientific">Rhizobium etli (strain ATCC 51251 / DSM 11541 / JCM 21823 / NBRC 15573 / CFN 42)</name>
    <dbReference type="NCBI Taxonomy" id="347834"/>
    <lineage>
        <taxon>Bacteria</taxon>
        <taxon>Pseudomonadati</taxon>
        <taxon>Pseudomonadota</taxon>
        <taxon>Alphaproteobacteria</taxon>
        <taxon>Hyphomicrobiales</taxon>
        <taxon>Rhizobiaceae</taxon>
        <taxon>Rhizobium/Agrobacterium group</taxon>
        <taxon>Rhizobium</taxon>
    </lineage>
</organism>
<evidence type="ECO:0000255" key="1">
    <source>
        <dbReference type="HAMAP-Rule" id="MF_00155"/>
    </source>
</evidence>
<feature type="chain" id="PRO_0000246138" description="Cytochrome c oxidase assembly protein CtaG">
    <location>
        <begin position="1"/>
        <end position="202"/>
    </location>
</feature>
<feature type="topological domain" description="Cytoplasmic" evidence="1">
    <location>
        <begin position="1"/>
        <end position="14"/>
    </location>
</feature>
<feature type="transmembrane region" description="Helical; Signal-anchor for type II membrane protein" evidence="1">
    <location>
        <begin position="15"/>
        <end position="37"/>
    </location>
</feature>
<feature type="topological domain" description="Periplasmic" evidence="1">
    <location>
        <begin position="38"/>
        <end position="202"/>
    </location>
</feature>
<proteinExistence type="inferred from homology"/>
<gene>
    <name evidence="1" type="primary">ctaG</name>
    <name type="ordered locus">RHE_CH00955</name>
</gene>
<reference key="1">
    <citation type="journal article" date="2006" name="Proc. Natl. Acad. Sci. U.S.A.">
        <title>The partitioned Rhizobium etli genome: genetic and metabolic redundancy in seven interacting replicons.</title>
        <authorList>
            <person name="Gonzalez V."/>
            <person name="Santamaria R.I."/>
            <person name="Bustos P."/>
            <person name="Hernandez-Gonzalez I."/>
            <person name="Medrano-Soto A."/>
            <person name="Moreno-Hagelsieb G."/>
            <person name="Janga S.C."/>
            <person name="Ramirez M.A."/>
            <person name="Jimenez-Jacinto V."/>
            <person name="Collado-Vides J."/>
            <person name="Davila G."/>
        </authorList>
    </citation>
    <scope>NUCLEOTIDE SEQUENCE [LARGE SCALE GENOMIC DNA]</scope>
    <source>
        <strain>ATCC 51251 / DSM 11541 / JCM 21823 / NBRC 15573 / CFN 42</strain>
    </source>
</reference>